<name>RS20_STRM5</name>
<keyword id="KW-0687">Ribonucleoprotein</keyword>
<keyword id="KW-0689">Ribosomal protein</keyword>
<keyword id="KW-0694">RNA-binding</keyword>
<keyword id="KW-0699">rRNA-binding</keyword>
<gene>
    <name evidence="1" type="primary">rpsT</name>
    <name type="ordered locus">Smal_1122</name>
</gene>
<feature type="chain" id="PRO_1000126521" description="Small ribosomal subunit protein bS20">
    <location>
        <begin position="1"/>
        <end position="89"/>
    </location>
</feature>
<sequence>MANIKSAKKRAKQTVVRNARNVAQRSMLRTAVKKVIKALDANDAAGAQAAFAVAQPILDRFSARGLIHKNKAARHKSRLNDRIKALAAA</sequence>
<accession>B4SP15</accession>
<evidence type="ECO:0000255" key="1">
    <source>
        <dbReference type="HAMAP-Rule" id="MF_00500"/>
    </source>
</evidence>
<evidence type="ECO:0000305" key="2"/>
<reference key="1">
    <citation type="submission" date="2008-06" db="EMBL/GenBank/DDBJ databases">
        <title>Complete sequence of Stenotrophomonas maltophilia R551-3.</title>
        <authorList>
            <consortium name="US DOE Joint Genome Institute"/>
            <person name="Lucas S."/>
            <person name="Copeland A."/>
            <person name="Lapidus A."/>
            <person name="Glavina del Rio T."/>
            <person name="Dalin E."/>
            <person name="Tice H."/>
            <person name="Pitluck S."/>
            <person name="Chain P."/>
            <person name="Malfatti S."/>
            <person name="Shin M."/>
            <person name="Vergez L."/>
            <person name="Lang D."/>
            <person name="Schmutz J."/>
            <person name="Larimer F."/>
            <person name="Land M."/>
            <person name="Hauser L."/>
            <person name="Kyrpides N."/>
            <person name="Mikhailova N."/>
            <person name="Taghavi S."/>
            <person name="Monchy S."/>
            <person name="Newman L."/>
            <person name="Vangronsveld J."/>
            <person name="van der Lelie D."/>
            <person name="Richardson P."/>
        </authorList>
    </citation>
    <scope>NUCLEOTIDE SEQUENCE [LARGE SCALE GENOMIC DNA]</scope>
    <source>
        <strain>R551-3</strain>
    </source>
</reference>
<organism>
    <name type="scientific">Stenotrophomonas maltophilia (strain R551-3)</name>
    <dbReference type="NCBI Taxonomy" id="391008"/>
    <lineage>
        <taxon>Bacteria</taxon>
        <taxon>Pseudomonadati</taxon>
        <taxon>Pseudomonadota</taxon>
        <taxon>Gammaproteobacteria</taxon>
        <taxon>Lysobacterales</taxon>
        <taxon>Lysobacteraceae</taxon>
        <taxon>Stenotrophomonas</taxon>
        <taxon>Stenotrophomonas maltophilia group</taxon>
    </lineage>
</organism>
<protein>
    <recommendedName>
        <fullName evidence="1">Small ribosomal subunit protein bS20</fullName>
    </recommendedName>
    <alternativeName>
        <fullName evidence="2">30S ribosomal protein S20</fullName>
    </alternativeName>
</protein>
<comment type="function">
    <text evidence="1">Binds directly to 16S ribosomal RNA.</text>
</comment>
<comment type="similarity">
    <text evidence="1">Belongs to the bacterial ribosomal protein bS20 family.</text>
</comment>
<dbReference type="EMBL" id="CP001111">
    <property type="protein sequence ID" value="ACF50827.1"/>
    <property type="molecule type" value="Genomic_DNA"/>
</dbReference>
<dbReference type="RefSeq" id="WP_004148449.1">
    <property type="nucleotide sequence ID" value="NC_011071.1"/>
</dbReference>
<dbReference type="SMR" id="B4SP15"/>
<dbReference type="STRING" id="391008.Smal_1122"/>
<dbReference type="KEGG" id="smt:Smal_1122"/>
<dbReference type="eggNOG" id="COG0268">
    <property type="taxonomic scope" value="Bacteria"/>
</dbReference>
<dbReference type="HOGENOM" id="CLU_160655_4_0_6"/>
<dbReference type="OrthoDB" id="9807974at2"/>
<dbReference type="Proteomes" id="UP000001867">
    <property type="component" value="Chromosome"/>
</dbReference>
<dbReference type="GO" id="GO:0005829">
    <property type="term" value="C:cytosol"/>
    <property type="evidence" value="ECO:0007669"/>
    <property type="project" value="TreeGrafter"/>
</dbReference>
<dbReference type="GO" id="GO:0015935">
    <property type="term" value="C:small ribosomal subunit"/>
    <property type="evidence" value="ECO:0007669"/>
    <property type="project" value="TreeGrafter"/>
</dbReference>
<dbReference type="GO" id="GO:0070181">
    <property type="term" value="F:small ribosomal subunit rRNA binding"/>
    <property type="evidence" value="ECO:0007669"/>
    <property type="project" value="TreeGrafter"/>
</dbReference>
<dbReference type="GO" id="GO:0003735">
    <property type="term" value="F:structural constituent of ribosome"/>
    <property type="evidence" value="ECO:0007669"/>
    <property type="project" value="InterPro"/>
</dbReference>
<dbReference type="GO" id="GO:0006412">
    <property type="term" value="P:translation"/>
    <property type="evidence" value="ECO:0007669"/>
    <property type="project" value="UniProtKB-UniRule"/>
</dbReference>
<dbReference type="FunFam" id="1.20.58.110:FF:000001">
    <property type="entry name" value="30S ribosomal protein S20"/>
    <property type="match status" value="1"/>
</dbReference>
<dbReference type="Gene3D" id="1.20.58.110">
    <property type="entry name" value="Ribosomal protein S20"/>
    <property type="match status" value="1"/>
</dbReference>
<dbReference type="HAMAP" id="MF_00500">
    <property type="entry name" value="Ribosomal_bS20"/>
    <property type="match status" value="1"/>
</dbReference>
<dbReference type="InterPro" id="IPR002583">
    <property type="entry name" value="Ribosomal_bS20"/>
</dbReference>
<dbReference type="InterPro" id="IPR036510">
    <property type="entry name" value="Ribosomal_bS20_sf"/>
</dbReference>
<dbReference type="NCBIfam" id="TIGR00029">
    <property type="entry name" value="S20"/>
    <property type="match status" value="1"/>
</dbReference>
<dbReference type="PANTHER" id="PTHR33398">
    <property type="entry name" value="30S RIBOSOMAL PROTEIN S20"/>
    <property type="match status" value="1"/>
</dbReference>
<dbReference type="PANTHER" id="PTHR33398:SF1">
    <property type="entry name" value="SMALL RIBOSOMAL SUBUNIT PROTEIN BS20C"/>
    <property type="match status" value="1"/>
</dbReference>
<dbReference type="Pfam" id="PF01649">
    <property type="entry name" value="Ribosomal_S20p"/>
    <property type="match status" value="1"/>
</dbReference>
<dbReference type="SUPFAM" id="SSF46992">
    <property type="entry name" value="Ribosomal protein S20"/>
    <property type="match status" value="1"/>
</dbReference>
<proteinExistence type="inferred from homology"/>